<reference key="1">
    <citation type="journal article" date="1989" name="Nucleic Acids Res.">
        <title>H2A.X. a histone isoprotein with a conserved C-terminal sequence, is encoded by a novel mRNA with both DNA replication type and polyA 3' processing signals.</title>
        <authorList>
            <person name="Mannironi C."/>
            <person name="Bonner W.M."/>
            <person name="Hatch C.L."/>
        </authorList>
    </citation>
    <scope>NUCLEOTIDE SEQUENCE [MRNA]</scope>
</reference>
<reference key="2">
    <citation type="submission" date="2004-06" db="EMBL/GenBank/DDBJ databases">
        <title>Cloning of human full open reading frames in Gateway(TM) system entry vector (pDONR201).</title>
        <authorList>
            <person name="Ebert L."/>
            <person name="Schick M."/>
            <person name="Neubert P."/>
            <person name="Schatten R."/>
            <person name="Henze S."/>
            <person name="Korn B."/>
        </authorList>
    </citation>
    <scope>NUCLEOTIDE SEQUENCE [LARGE SCALE MRNA]</scope>
</reference>
<reference key="3">
    <citation type="submission" date="2005-04" db="EMBL/GenBank/DDBJ databases">
        <authorList>
            <consortium name="NIEHS SNPs program"/>
        </authorList>
    </citation>
    <scope>NUCLEOTIDE SEQUENCE [GENOMIC DNA]</scope>
</reference>
<reference key="4">
    <citation type="journal article" date="2004" name="Genome Res.">
        <title>The status, quality, and expansion of the NIH full-length cDNA project: the Mammalian Gene Collection (MGC).</title>
        <authorList>
            <consortium name="The MGC Project Team"/>
        </authorList>
    </citation>
    <scope>NUCLEOTIDE SEQUENCE [LARGE SCALE MRNA]</scope>
    <source>
        <tissue>Lung</tissue>
        <tissue>Placenta</tissue>
    </source>
</reference>
<reference key="5">
    <citation type="journal article" date="1998" name="J. Biol. Chem.">
        <title>DNA double-stranded breaks induce histone H2AX phosphorylation on serine 139.</title>
        <authorList>
            <person name="Rogakou E.P."/>
            <person name="Pilch D.R."/>
            <person name="Orr A.H."/>
            <person name="Ivanova V.S."/>
            <person name="Bonner W.M."/>
        </authorList>
    </citation>
    <scope>PHOSPHORYLATION AT SER-140</scope>
    <scope>MUTAGENESIS OF GLN-141</scope>
</reference>
<reference key="6">
    <citation type="journal article" date="1999" name="J. Cell Biol.">
        <title>Megabase chromatin domains involved in DNA double-strand breaks in vivo.</title>
        <authorList>
            <person name="Rogakou E.P."/>
            <person name="Boon C."/>
            <person name="Redon C."/>
            <person name="Bonner W.M."/>
        </authorList>
    </citation>
    <scope>SUBCELLULAR LOCATION</scope>
    <scope>PHOSPHORYLATION AT SER-140</scope>
</reference>
<reference key="7">
    <citation type="journal article" date="2000" name="Curr. Biol.">
        <title>A critical role for histone H2AX in recruitment of repair factors to nuclear foci after DNA damage.</title>
        <authorList>
            <person name="Paull T.T."/>
            <person name="Rogakou E.P."/>
            <person name="Yamazaki V."/>
            <person name="Kirchgessner C.U."/>
            <person name="Gellert M."/>
            <person name="Bonner W.M."/>
        </authorList>
    </citation>
    <scope>FUNCTION</scope>
    <scope>SUBCELLULAR LOCATION</scope>
    <scope>PHOSPHORYLATION AT SER-140</scope>
</reference>
<reference key="8">
    <citation type="journal article" date="2000" name="J. Biol. Chem.">
        <title>Initiation of DNA fragmentation during apoptosis induces phosphorylation of H2AX histone at serine 139.</title>
        <authorList>
            <person name="Rogakou E.P."/>
            <person name="Nieves-Neira W."/>
            <person name="Boon C."/>
            <person name="Pommier Y."/>
            <person name="Bonner W.M."/>
        </authorList>
    </citation>
    <scope>PHOSPHORYLATION AT SER-140</scope>
</reference>
<reference key="9">
    <citation type="journal article" date="2001" name="J. Biol. Chem.">
        <title>Histone H2AX is phosphorylated in an ATR-dependent manner in response to replicational stress.</title>
        <authorList>
            <person name="Ward I.M."/>
            <person name="Chen J."/>
        </authorList>
    </citation>
    <scope>SUBCELLULAR LOCATION</scope>
    <scope>PHOSPHORYLATION AT SER-140</scope>
</reference>
<reference key="10">
    <citation type="journal article" date="2002" name="Curr. Biol.">
        <title>NBS1 localizes to gamma-H2AX foci through interaction with the FHA/BRCT domain.</title>
        <authorList>
            <person name="Kobayashi J."/>
            <person name="Tauchi H."/>
            <person name="Sakamoto S."/>
            <person name="Nakamura A."/>
            <person name="Morishima K."/>
            <person name="Matsuura S."/>
            <person name="Kobayashi T."/>
            <person name="Tamai K."/>
            <person name="Tanimoto K."/>
            <person name="Komatsu K."/>
        </authorList>
    </citation>
    <scope>FUNCTION</scope>
    <scope>INTERACTION WITH NBN AND BRCA1</scope>
    <scope>SUBCELLULAR LOCATION</scope>
    <scope>PHOSPHORYLATION AT SER-140</scope>
</reference>
<reference key="11">
    <citation type="journal article" date="2003" name="J. Biol. Chem.">
        <title>Accumulation of checkpoint protein 53BP1 at DNA breaks involves its binding to phosphorylated histone H2AX.</title>
        <authorList>
            <person name="Ward I.M."/>
            <person name="Minn K."/>
            <person name="Jorda K.G."/>
            <person name="Chen J."/>
        </authorList>
    </citation>
    <scope>SUBCELLULAR LOCATION</scope>
    <scope>PHOSPHORYLATION AT SER-140</scope>
</reference>
<reference key="12">
    <citation type="journal article" date="2003" name="J. Biol. Chem.">
        <title>Phosphorylation of histone H2AX and activation of Mre11, Rad50, and Nbs1 in response to replication-dependent DNA double-strand breaks induced by mammalian DNA topoisomerase I cleavage complexes.</title>
        <authorList>
            <person name="Furuta T."/>
            <person name="Takemura H."/>
            <person name="Liao Z.-Y."/>
            <person name="Aune G.J."/>
            <person name="Redon C."/>
            <person name="Sedelnikova O.A."/>
            <person name="Pilch D.R."/>
            <person name="Rogakou E.P."/>
            <person name="Celeste A."/>
            <person name="Chen H.T."/>
            <person name="Nussenzweig A."/>
            <person name="Aladjem M.I."/>
            <person name="Bonner W.M."/>
            <person name="Pommier Y."/>
        </authorList>
    </citation>
    <scope>SUBCELLULAR LOCATION</scope>
    <scope>PHOSPHORYLATION AT SER-140</scope>
</reference>
<reference key="13">
    <citation type="journal article" date="2003" name="Nature">
        <title>MDC1 is a mediator of the mammalian DNA damage checkpoint.</title>
        <authorList>
            <person name="Stewart G.S."/>
            <person name="Wang B."/>
            <person name="Bignell C.R."/>
            <person name="Taylor A.M.R."/>
            <person name="Elledge S.J."/>
        </authorList>
    </citation>
    <scope>FUNCTION</scope>
    <scope>INTERACTION WITH MDC1 AND TP53BP1</scope>
    <scope>SUBCELLULAR LOCATION</scope>
    <scope>PHOSPHORYLATION AT SER-140</scope>
</reference>
<reference key="14">
    <citation type="journal article" date="2003" name="Nucleic Acids Res.">
        <title>DNA-PK is activated by nucleosomes and phosphorylates H2AX within the nucleosomes in an acetylation-dependent manner.</title>
        <authorList>
            <person name="Park E.-J."/>
            <person name="Chan D.W."/>
            <person name="Park J.-H."/>
            <person name="Oettinger M.A."/>
            <person name="Kwon J."/>
        </authorList>
    </citation>
    <scope>PHOSPHORYLATION AT SER-140</scope>
</reference>
<reference key="15">
    <citation type="journal article" date="2004" name="Cancer Res.">
        <title>ATM and DNA-PK function redundantly to phosphorylate H2AX after exposure to ionizing radiation.</title>
        <authorList>
            <person name="Stiff T."/>
            <person name="O'Driscoll M."/>
            <person name="Rief N."/>
            <person name="Iwabuchi K."/>
            <person name="Loebrich M."/>
            <person name="Jeggo P.A."/>
        </authorList>
    </citation>
    <scope>SUBCELLULAR LOCATION</scope>
    <scope>PHOSPHORYLATION AT SER-140</scope>
</reference>
<reference key="16">
    <citation type="journal article" date="2004" name="EMBO J.">
        <title>Mdc1 couples DNA double-strand break recognition by Nbs1 with its H2AX-dependent chromatin retention.</title>
        <authorList>
            <person name="Lukas C."/>
            <person name="Melander F."/>
            <person name="Stucki M."/>
            <person name="Falck J."/>
            <person name="Bekker-Jensen S."/>
            <person name="Goldberg M."/>
            <person name="Lerenthal Y."/>
            <person name="Jackson S.P."/>
            <person name="Bartek J."/>
            <person name="Lukas J."/>
        </authorList>
    </citation>
    <scope>FUNCTION</scope>
    <scope>INTERACTION WITH MDC1 AND NBN</scope>
    <scope>SUBCELLULAR LOCATION</scope>
</reference>
<reference key="17">
    <citation type="journal article" date="2004" name="J. Biol. Chem.">
        <title>Doxorubicin activates ATM-dependent phosphorylation of multiple downstream targets in part through the generation of reactive oxygen species.</title>
        <authorList>
            <person name="Kurz E.U."/>
            <person name="Douglas P."/>
            <person name="Lees-Miller S.P."/>
        </authorList>
    </citation>
    <scope>PHOSPHORYLATION AT SER-140</scope>
</reference>
<reference key="18">
    <citation type="journal article" date="2005" name="J. Biol. Chem.">
        <title>Actinomycin D induces histone gamma-H2AX foci and complex formation of gamma-H2AX with Ku70 and nuclear DNA helicase II.</title>
        <authorList>
            <person name="Mischo H.E."/>
            <person name="Hemmerich P."/>
            <person name="Grosse F."/>
            <person name="Zhang S."/>
        </authorList>
    </citation>
    <scope>INTERACTION WITH DHX9</scope>
    <scope>SUBCELLULAR LOCATION</scope>
    <scope>PHOSPHORYLATION AT SER-140</scope>
</reference>
<reference key="19">
    <citation type="journal article" date="2005" name="Mol. Cell">
        <title>gamma-H2AX dephosphorylation by protein phosphatase 2A facilitates DNA double-strand break repair.</title>
        <authorList>
            <person name="Chowdhury D."/>
            <person name="Keogh M.-C."/>
            <person name="Ishii H."/>
            <person name="Peterson C.L."/>
            <person name="Buratowski S."/>
            <person name="Lieberman J."/>
        </authorList>
    </citation>
    <scope>DEPHOSPHORYLATION</scope>
</reference>
<reference key="20">
    <citation type="journal article" date="2006" name="J. Cell Sci.">
        <title>Novel function of beta-arrestin2 in the nucleus of mature spermatozoa.</title>
        <authorList>
            <person name="Neuhaus E.M."/>
            <person name="Mashukova A."/>
            <person name="Barbour J."/>
            <person name="Wolters D."/>
            <person name="Hatt H."/>
        </authorList>
    </citation>
    <scope>INTERACTION WITH ARRB2</scope>
</reference>
<reference key="21">
    <citation type="journal article" date="2007" name="Cell">
        <title>RNF8 ubiquitylates histones at DNA double-strand breaks and promotes assembly of repair proteins.</title>
        <authorList>
            <person name="Mailand N."/>
            <person name="Bekker-Jensen S."/>
            <person name="Faustrup H."/>
            <person name="Melander F."/>
            <person name="Bartek J."/>
            <person name="Lukas C."/>
            <person name="Lukas J."/>
        </authorList>
    </citation>
    <scope>UBIQUITINATION</scope>
</reference>
<reference key="22">
    <citation type="journal article" date="2007" name="Cell">
        <title>RNF8 transduces the DNA-damage signal via histone ubiquitylation and checkpoint protein assembly.</title>
        <authorList>
            <person name="Huen M.S.Y."/>
            <person name="Grant R."/>
            <person name="Manke I."/>
            <person name="Minn K."/>
            <person name="Yu X."/>
            <person name="Yaffe M.B."/>
            <person name="Chen J."/>
        </authorList>
    </citation>
    <scope>UBIQUITINATION</scope>
</reference>
<reference key="23">
    <citation type="journal article" date="2007" name="Mol. Cell. Biol.">
        <title>DNA damage-dependent acetylation and ubiquitination of H2AX enhances chromatin dynamics.</title>
        <authorList>
            <person name="Ikura T."/>
            <person name="Tashiro S."/>
            <person name="Kakino A."/>
            <person name="Shima H."/>
            <person name="Jacob N."/>
            <person name="Amunugama R."/>
            <person name="Yoder K."/>
            <person name="Izumi S."/>
            <person name="Kuraoka I."/>
            <person name="Tanaka K."/>
            <person name="Kimura H."/>
            <person name="Ikura M."/>
            <person name="Nishikubo S."/>
            <person name="Ito T."/>
            <person name="Muto A."/>
            <person name="Miyagawa K."/>
            <person name="Takeda S."/>
            <person name="Fishel R."/>
            <person name="Igarashi K."/>
            <person name="Kamiya K."/>
        </authorList>
    </citation>
    <scope>FUNCTION</scope>
    <scope>ACETYLATION AT LYS-6</scope>
    <scope>UBIQUITINATION AT LYS-120</scope>
    <scope>PHOSPHORYLATION AT SER-140</scope>
    <scope>MUTAGENESIS OF LYS-6 AND SER-140</scope>
</reference>
<reference key="24">
    <citation type="journal article" date="2007" name="Science">
        <title>ATM and ATR substrate analysis reveals extensive protein networks responsive to DNA damage.</title>
        <authorList>
            <person name="Matsuoka S."/>
            <person name="Ballif B.A."/>
            <person name="Smogorzewska A."/>
            <person name="McDonald E.R. III"/>
            <person name="Hurov K.E."/>
            <person name="Luo J."/>
            <person name="Bakalarski C.E."/>
            <person name="Zhao Z."/>
            <person name="Solimini N."/>
            <person name="Lerenthal Y."/>
            <person name="Shiloh Y."/>
            <person name="Gygi S.P."/>
            <person name="Elledge S.J."/>
        </authorList>
    </citation>
    <scope>PHOSPHORYLATION [LARGE SCALE ANALYSIS] AT SER-140</scope>
    <scope>IDENTIFICATION BY MASS SPECTROMETRY [LARGE SCALE ANALYSIS]</scope>
    <source>
        <tissue>Embryonic kidney</tissue>
    </source>
</reference>
<reference key="25">
    <citation type="journal article" date="2009" name="Cell">
        <title>The RIDDLE syndrome protein mediates a ubiquitin-dependent signaling cascade at sites of DNA damage.</title>
        <authorList>
            <person name="Stewart G.S."/>
            <person name="Panier S."/>
            <person name="Townsend K."/>
            <person name="Al-Hakim A.K."/>
            <person name="Kolas N.K."/>
            <person name="Miller E.S."/>
            <person name="Nakada S."/>
            <person name="Ylanko J."/>
            <person name="Olivarius S."/>
            <person name="Mendez M."/>
            <person name="Oldreive C."/>
            <person name="Wildenhain J."/>
            <person name="Tagliaferro A."/>
            <person name="Pelletier L."/>
            <person name="Taubenheim N."/>
            <person name="Durandy A."/>
            <person name="Byrd P.J."/>
            <person name="Stankovic T."/>
            <person name="Taylor A.M.R."/>
            <person name="Durocher D."/>
        </authorList>
    </citation>
    <scope>UBIQUITINATION</scope>
</reference>
<reference key="26">
    <citation type="journal article" date="2009" name="Cell">
        <title>RNF168 binds and amplifies ubiquitin conjugates on damaged chromosomes to allow accumulation of repair proteins.</title>
        <authorList>
            <person name="Doil C."/>
            <person name="Mailand N."/>
            <person name="Bekker-Jensen S."/>
            <person name="Menard P."/>
            <person name="Larsen D.H."/>
            <person name="Pepperkok R."/>
            <person name="Ellenberg J."/>
            <person name="Panier S."/>
            <person name="Durocher D."/>
            <person name="Bartek J."/>
            <person name="Lukas J."/>
            <person name="Lukas C."/>
        </authorList>
    </citation>
    <scope>UBIQUITINATION</scope>
</reference>
<reference key="27">
    <citation type="journal article" date="2009" name="Nature">
        <title>WSTF regulates the H2A.X DNA damage response via a novel tyrosine kinase activity.</title>
        <authorList>
            <person name="Xiao A."/>
            <person name="Li H."/>
            <person name="Shechter D."/>
            <person name="Ahn S.H."/>
            <person name="Fabrizio L.A."/>
            <person name="Erdjument-Bromage H."/>
            <person name="Ishibe-Murakami S."/>
            <person name="Wang B."/>
            <person name="Tempst P."/>
            <person name="Hofmann K."/>
            <person name="Patel D.J."/>
            <person name="Elledge S.J."/>
            <person name="Allis C.D."/>
        </authorList>
    </citation>
    <scope>PHOSPHORYLATION AT TYR-143</scope>
    <scope>MUTAGENESIS OF TYR-143</scope>
</reference>
<reference key="28">
    <citation type="journal article" date="2009" name="Nature">
        <title>Tyrosine dephosphorylation of H2AX modulates apoptosis and survival decisions.</title>
        <authorList>
            <person name="Cook P.J."/>
            <person name="Ju B.G."/>
            <person name="Telese F."/>
            <person name="Wang X."/>
            <person name="Glass C.K."/>
            <person name="Rosenfeld M.G."/>
        </authorList>
    </citation>
    <scope>PHOSPHORYLATION AT TYR-143</scope>
    <scope>MUTAGENESIS OF TYR-143</scope>
</reference>
<reference key="29">
    <citation type="journal article" date="2010" name="Sci. Signal.">
        <title>Quantitative phosphoproteomics reveals widespread full phosphorylation site occupancy during mitosis.</title>
        <authorList>
            <person name="Olsen J.V."/>
            <person name="Vermeulen M."/>
            <person name="Santamaria A."/>
            <person name="Kumar C."/>
            <person name="Miller M.L."/>
            <person name="Jensen L.J."/>
            <person name="Gnad F."/>
            <person name="Cox J."/>
            <person name="Jensen T.S."/>
            <person name="Nigg E.A."/>
            <person name="Brunak S."/>
            <person name="Mann M."/>
        </authorList>
    </citation>
    <scope>PHOSPHORYLATION [LARGE SCALE ANALYSIS] AT SER-140</scope>
    <scope>IDENTIFICATION BY MASS SPECTROMETRY [LARGE SCALE ANALYSIS]</scope>
    <source>
        <tissue>Cervix carcinoma</tissue>
    </source>
</reference>
<reference key="30">
    <citation type="journal article" date="2011" name="Sci. Signal.">
        <title>System-wide temporal characterization of the proteome and phosphoproteome of human embryonic stem cell differentiation.</title>
        <authorList>
            <person name="Rigbolt K.T."/>
            <person name="Prokhorova T.A."/>
            <person name="Akimov V."/>
            <person name="Henningsen J."/>
            <person name="Johansen P.T."/>
            <person name="Kratchmarova I."/>
            <person name="Kassem M."/>
            <person name="Mann M."/>
            <person name="Olsen J.V."/>
            <person name="Blagoev B."/>
        </authorList>
    </citation>
    <scope>PHOSPHORYLATION [LARGE SCALE ANALYSIS] AT SER-140</scope>
    <scope>IDENTIFICATION BY MASS SPECTROMETRY [LARGE SCALE ANALYSIS]</scope>
</reference>
<reference key="31">
    <citation type="journal article" date="2012" name="Cell">
        <title>RNF168 ubiquitinates K13-15 on H2A/H2AX to drive DNA Damage signaling.</title>
        <authorList>
            <person name="Mattiroli F."/>
            <person name="Vissers J.H."/>
            <person name="van Dijk W.J."/>
            <person name="Ikpa P."/>
            <person name="Citterio E."/>
            <person name="Vermeulen W."/>
            <person name="Marteijn J.A."/>
            <person name="Sixma T.K."/>
        </authorList>
    </citation>
    <scope>UBIQUITINATION AT LYS-14 AND LYS-16 BY RNF168</scope>
</reference>
<reference key="32">
    <citation type="journal article" date="2014" name="J. Virol.">
        <title>Epstein-Barr virus essential antigen EBNA3C attenuates H2AX expression.</title>
        <authorList>
            <person name="Jha H.C."/>
            <person name="Aj M.P."/>
            <person name="Saha A."/>
            <person name="Banerjee S."/>
            <person name="Lu J."/>
            <person name="Robertson E.S."/>
        </authorList>
    </citation>
    <scope>INTERACTION WITH EPSTEIN-BARR VIRUS PROTEIN EBNA6 (MICROBIAL INFECTION)</scope>
    <scope>SUBCELLULAR LOCATION</scope>
</reference>
<reference key="33">
    <citation type="journal article" date="2014" name="Nat. Struct. Mol. Biol.">
        <title>Uncovering global SUMOylation signaling networks in a site-specific manner.</title>
        <authorList>
            <person name="Hendriks I.A."/>
            <person name="D'Souza R.C."/>
            <person name="Yang B."/>
            <person name="Verlaan-de Vries M."/>
            <person name="Mann M."/>
            <person name="Vertegaal A.C."/>
        </authorList>
    </citation>
    <scope>SUMOYLATION [LARGE SCALE ANALYSIS] AT LYS-135</scope>
    <scope>IDENTIFICATION BY MASS SPECTROMETRY [LARGE SCALE ANALYSIS]</scope>
</reference>
<reference key="34">
    <citation type="journal article" date="2015" name="Mol. Cell. Biol.">
        <title>Acetylation of histone H2AX at Lys 5 by the TIP60 histone acetyltransferase complex is essential for the dynamic binding of NBS1 to damaged chromatin.</title>
        <authorList>
            <person name="Ikura M."/>
            <person name="Furuya K."/>
            <person name="Matsuda S."/>
            <person name="Matsuda R."/>
            <person name="Shima H."/>
            <person name="Adachi J."/>
            <person name="Matsuda T."/>
            <person name="Shiraki T."/>
            <person name="Ikura T."/>
        </authorList>
    </citation>
    <scope>FUNCTION</scope>
    <scope>ACETYLATION AT LYS-6</scope>
</reference>
<reference key="35">
    <citation type="journal article" date="2015" name="Nucleus">
        <title>The proximity ligation assay reveals that at DNA double-strand breaks WRAP53beta associates with gammaH2AX and controls interactions between RNF8 and MDC1.</title>
        <authorList>
            <person name="Rassoolzadeh H."/>
            <person name="Coucoravas C."/>
            <person name="Farnebo M."/>
        </authorList>
    </citation>
    <scope>INTERACTION WITH WRAP53</scope>
</reference>
<reference key="36">
    <citation type="journal article" date="2016" name="Nucleic Acids Res.">
        <title>Hepatoma-derived growth factor-related protein 2 promotes DNA repair by homologous recombination.</title>
        <authorList>
            <person name="Baude A."/>
            <person name="Aaes T.L."/>
            <person name="Zhai B."/>
            <person name="Al-Nakouzi N."/>
            <person name="Oo H.Z."/>
            <person name="Daugaard M."/>
            <person name="Rohde M."/>
            <person name="Jaeaettelae M."/>
        </authorList>
    </citation>
    <scope>INTERACTION WITH HDGFL2</scope>
</reference>
<reference key="37">
    <citation type="journal article" date="2017" name="Nat. Struct. Mol. Biol.">
        <title>Site-specific mapping of the human SUMO proteome reveals co-modification with phosphorylation.</title>
        <authorList>
            <person name="Hendriks I.A."/>
            <person name="Lyon D."/>
            <person name="Young C."/>
            <person name="Jensen L.J."/>
            <person name="Vertegaal A.C."/>
            <person name="Nielsen M.L."/>
        </authorList>
    </citation>
    <scope>SUMOYLATION [LARGE SCALE ANALYSIS] AT LYS-128 AND LYS-135</scope>
    <scope>IDENTIFICATION BY MASS SPECTROMETRY [LARGE SCALE ANALYSIS]</scope>
</reference>
<reference key="38">
    <citation type="journal article" date="2017" name="RNA Biol.">
        <title>Phosphorylation of the Cajal body protein WRAP53beta by ATM promotes its involvement in the DNA damage response.</title>
        <authorList>
            <person name="Coucoravas C."/>
            <person name="Dhanjal S."/>
            <person name="Henriksson S."/>
            <person name="Boehm S."/>
            <person name="Farnebo M."/>
        </authorList>
    </citation>
    <scope>INTERACTION WITH WRAP53</scope>
</reference>
<reference key="39">
    <citation type="journal article" date="2019" name="Sci. Rep.">
        <title>VRK1 functional insufficiency due to alterations in protein stability or kinase activity of human VRK1 pathogenic variants implicated in neuromotor syndromes.</title>
        <authorList>
            <person name="Martin-Doncel E."/>
            <person name="Rojas A.M."/>
            <person name="Cantarero L."/>
            <person name="Lazo P.A."/>
        </authorList>
    </citation>
    <scope>PHOSPHORYLATION BY VRK1</scope>
</reference>
<reference key="40">
    <citation type="journal article" date="2022" name="Nucleic Acids Res.">
        <title>LncRNA CTBP1-DT-encoded microprotein DDUP sustains DNA damage response signalling to trigger dual DNA repair mechanisms.</title>
        <authorList>
            <person name="Yu R."/>
            <person name="Hu Y."/>
            <person name="Zhang S."/>
            <person name="Li X."/>
            <person name="Tang M."/>
            <person name="Yang M."/>
            <person name="Wu X."/>
            <person name="Li Z."/>
            <person name="Liao X."/>
            <person name="Xu Y."/>
            <person name="Li M."/>
            <person name="Chen S."/>
            <person name="Qian W."/>
            <person name="Gong L.Y."/>
            <person name="Song L."/>
            <person name="Li J."/>
        </authorList>
    </citation>
    <scope>INTERACTION WITH DDUP AND RAD18</scope>
</reference>
<reference key="41">
    <citation type="journal article" date="2012" name="J. Struct. Biol.">
        <title>Specific recognition of phosphorylated tail of H2AX by the tandem BRCT domains of MCPH1 revealed by complex structure.</title>
        <authorList>
            <person name="Shao Z."/>
            <person name="Li F."/>
            <person name="Sy S.M."/>
            <person name="Yan W."/>
            <person name="Zhang Z."/>
            <person name="Gong D."/>
            <person name="Wen B."/>
            <person name="Huen M.S."/>
            <person name="Gong Q."/>
            <person name="Wu J."/>
            <person name="Shi Y."/>
        </authorList>
    </citation>
    <scope>X-RAY CRYSTALLOGRAPHY (2.1 ANGSTROMS) OF 134-143</scope>
    <scope>PHOSPHORYLATION AT SER-140</scope>
</reference>
<evidence type="ECO:0000250" key="1">
    <source>
        <dbReference type="UniProtKB" id="P0C0S5"/>
    </source>
</evidence>
<evidence type="ECO:0000250" key="2">
    <source>
        <dbReference type="UniProtKB" id="P27661"/>
    </source>
</evidence>
<evidence type="ECO:0000256" key="3">
    <source>
        <dbReference type="SAM" id="MobiDB-lite"/>
    </source>
</evidence>
<evidence type="ECO:0000269" key="4">
    <source>
    </source>
</evidence>
<evidence type="ECO:0000269" key="5">
    <source>
    </source>
</evidence>
<evidence type="ECO:0000269" key="6">
    <source>
    </source>
</evidence>
<evidence type="ECO:0000269" key="7">
    <source>
    </source>
</evidence>
<evidence type="ECO:0000269" key="8">
    <source>
    </source>
</evidence>
<evidence type="ECO:0000269" key="9">
    <source>
    </source>
</evidence>
<evidence type="ECO:0000269" key="10">
    <source>
    </source>
</evidence>
<evidence type="ECO:0000269" key="11">
    <source>
    </source>
</evidence>
<evidence type="ECO:0000269" key="12">
    <source>
    </source>
</evidence>
<evidence type="ECO:0000269" key="13">
    <source>
    </source>
</evidence>
<evidence type="ECO:0000269" key="14">
    <source>
    </source>
</evidence>
<evidence type="ECO:0000269" key="15">
    <source>
    </source>
</evidence>
<evidence type="ECO:0000269" key="16">
    <source>
    </source>
</evidence>
<evidence type="ECO:0000269" key="17">
    <source>
    </source>
</evidence>
<evidence type="ECO:0000269" key="18">
    <source>
    </source>
</evidence>
<evidence type="ECO:0000269" key="19">
    <source>
    </source>
</evidence>
<evidence type="ECO:0000269" key="20">
    <source>
    </source>
</evidence>
<evidence type="ECO:0000269" key="21">
    <source>
    </source>
</evidence>
<evidence type="ECO:0000269" key="22">
    <source>
    </source>
</evidence>
<evidence type="ECO:0000269" key="23">
    <source>
    </source>
</evidence>
<evidence type="ECO:0000269" key="24">
    <source>
    </source>
</evidence>
<evidence type="ECO:0000269" key="25">
    <source>
    </source>
</evidence>
<evidence type="ECO:0000269" key="26">
    <source>
    </source>
</evidence>
<evidence type="ECO:0000269" key="27">
    <source>
    </source>
</evidence>
<evidence type="ECO:0000269" key="28">
    <source>
    </source>
</evidence>
<evidence type="ECO:0000269" key="29">
    <source>
    </source>
</evidence>
<evidence type="ECO:0000269" key="30">
    <source>
    </source>
</evidence>
<evidence type="ECO:0000269" key="31">
    <source>
    </source>
</evidence>
<evidence type="ECO:0000269" key="32">
    <source>
    </source>
</evidence>
<evidence type="ECO:0000269" key="33">
    <source>
    </source>
</evidence>
<evidence type="ECO:0000269" key="34">
    <source>
    </source>
</evidence>
<evidence type="ECO:0000305" key="35"/>
<evidence type="ECO:0000312" key="36">
    <source>
        <dbReference type="HGNC" id="HGNC:4739"/>
    </source>
</evidence>
<evidence type="ECO:0007744" key="37">
    <source>
    </source>
</evidence>
<evidence type="ECO:0007744" key="38">
    <source>
    </source>
</evidence>
<evidence type="ECO:0007744" key="39">
    <source>
    </source>
</evidence>
<evidence type="ECO:0007744" key="40">
    <source>
    </source>
</evidence>
<evidence type="ECO:0007744" key="41">
    <source>
    </source>
</evidence>
<evidence type="ECO:0007829" key="42">
    <source>
        <dbReference type="PDB" id="6K1I"/>
    </source>
</evidence>
<evidence type="ECO:0007829" key="43">
    <source>
        <dbReference type="PDB" id="6K1K"/>
    </source>
</evidence>
<evidence type="ECO:0007829" key="44">
    <source>
        <dbReference type="PDB" id="6ZWK"/>
    </source>
</evidence>
<dbReference type="EMBL" id="X14850">
    <property type="protein sequence ID" value="CAA32968.1"/>
    <property type="molecule type" value="mRNA"/>
</dbReference>
<dbReference type="EMBL" id="CR457079">
    <property type="protein sequence ID" value="CAG33360.1"/>
    <property type="molecule type" value="mRNA"/>
</dbReference>
<dbReference type="EMBL" id="DQ015918">
    <property type="protein sequence ID" value="AAY22178.1"/>
    <property type="molecule type" value="Genomic_DNA"/>
</dbReference>
<dbReference type="EMBL" id="BC004915">
    <property type="protein sequence ID" value="AAH04915.1"/>
    <property type="molecule type" value="mRNA"/>
</dbReference>
<dbReference type="EMBL" id="BC011694">
    <property type="protein sequence ID" value="AAH11694.1"/>
    <property type="molecule type" value="mRNA"/>
</dbReference>
<dbReference type="EMBL" id="BC013416">
    <property type="protein sequence ID" value="AAH13416.1"/>
    <property type="molecule type" value="mRNA"/>
</dbReference>
<dbReference type="CCDS" id="CCDS8410.1"/>
<dbReference type="PIR" id="S07631">
    <property type="entry name" value="S07631"/>
</dbReference>
<dbReference type="RefSeq" id="NP_002096.1">
    <property type="nucleotide sequence ID" value="NM_002105.3"/>
</dbReference>
<dbReference type="PDB" id="1YDP">
    <property type="method" value="X-ray"/>
    <property type="resolution" value="1.90 A"/>
    <property type="chains" value="P=78-86"/>
</dbReference>
<dbReference type="PDB" id="2AZM">
    <property type="method" value="X-ray"/>
    <property type="resolution" value="2.41 A"/>
    <property type="chains" value="C/D=134-143"/>
</dbReference>
<dbReference type="PDB" id="2D31">
    <property type="method" value="X-ray"/>
    <property type="resolution" value="3.20 A"/>
    <property type="chains" value="C/F=78-86"/>
</dbReference>
<dbReference type="PDB" id="2DYP">
    <property type="method" value="X-ray"/>
    <property type="resolution" value="2.50 A"/>
    <property type="chains" value="C=78-86"/>
</dbReference>
<dbReference type="PDB" id="3SHV">
    <property type="method" value="X-ray"/>
    <property type="resolution" value="2.10 A"/>
    <property type="chains" value="C/D=134-143"/>
</dbReference>
<dbReference type="PDB" id="3SQD">
    <property type="method" value="X-ray"/>
    <property type="resolution" value="2.15 A"/>
    <property type="chains" value="C/D=134-143"/>
</dbReference>
<dbReference type="PDB" id="3SZM">
    <property type="method" value="X-ray"/>
    <property type="resolution" value="2.63 A"/>
    <property type="chains" value="I/J/K/L/M/N/O/P=134-143"/>
</dbReference>
<dbReference type="PDB" id="3U3Z">
    <property type="method" value="X-ray"/>
    <property type="resolution" value="1.50 A"/>
    <property type="chains" value="B=140-143"/>
</dbReference>
<dbReference type="PDB" id="6K1I">
    <property type="method" value="X-ray"/>
    <property type="resolution" value="2.75 A"/>
    <property type="chains" value="C/G=1-143"/>
</dbReference>
<dbReference type="PDB" id="6K1J">
    <property type="method" value="X-ray"/>
    <property type="resolution" value="2.85 A"/>
    <property type="chains" value="C/G=1-143"/>
</dbReference>
<dbReference type="PDB" id="6K1K">
    <property type="method" value="X-ray"/>
    <property type="resolution" value="2.20 A"/>
    <property type="chains" value="C/G=1-143"/>
</dbReference>
<dbReference type="PDB" id="6ZWK">
    <property type="method" value="X-ray"/>
    <property type="resolution" value="1.55 A"/>
    <property type="chains" value="G/H/I/J/K/L=134-143"/>
</dbReference>
<dbReference type="PDB" id="7YQK">
    <property type="method" value="EM"/>
    <property type="resolution" value="3.38 A"/>
    <property type="chains" value="C/G=11-121"/>
</dbReference>
<dbReference type="PDBsum" id="1YDP"/>
<dbReference type="PDBsum" id="2AZM"/>
<dbReference type="PDBsum" id="2D31"/>
<dbReference type="PDBsum" id="2DYP"/>
<dbReference type="PDBsum" id="3SHV"/>
<dbReference type="PDBsum" id="3SQD"/>
<dbReference type="PDBsum" id="3SZM"/>
<dbReference type="PDBsum" id="3U3Z"/>
<dbReference type="PDBsum" id="6K1I"/>
<dbReference type="PDBsum" id="6K1J"/>
<dbReference type="PDBsum" id="6K1K"/>
<dbReference type="PDBsum" id="6ZWK"/>
<dbReference type="PDBsum" id="7YQK"/>
<dbReference type="EMDB" id="EMD-17159"/>
<dbReference type="EMDB" id="EMD-17162"/>
<dbReference type="EMDB" id="EMD-18714"/>
<dbReference type="EMDB" id="EMD-18739"/>
<dbReference type="EMDB" id="EMD-18740"/>
<dbReference type="EMDB" id="EMD-18745"/>
<dbReference type="EMDB" id="EMD-18753"/>
<dbReference type="EMDB" id="EMD-18763"/>
<dbReference type="EMDB" id="EMD-18768"/>
<dbReference type="EMDB" id="EMD-18775"/>
<dbReference type="EMDB" id="EMD-18776"/>
<dbReference type="SMR" id="P16104"/>
<dbReference type="BioGRID" id="109268">
    <property type="interactions" value="650"/>
</dbReference>
<dbReference type="CORUM" id="P16104"/>
<dbReference type="DIP" id="DIP-33604N"/>
<dbReference type="ELM" id="P16104"/>
<dbReference type="FunCoup" id="P16104">
    <property type="interactions" value="1392"/>
</dbReference>
<dbReference type="IntAct" id="P16104">
    <property type="interactions" value="359"/>
</dbReference>
<dbReference type="MINT" id="P16104"/>
<dbReference type="STRING" id="9606.ENSP00000434024"/>
<dbReference type="GlyCosmos" id="P16104">
    <property type="glycosylation" value="2 sites, 1 glycan"/>
</dbReference>
<dbReference type="GlyGen" id="P16104">
    <property type="glycosylation" value="2 sites, 1 O-linked glycan (2 sites)"/>
</dbReference>
<dbReference type="iPTMnet" id="P16104"/>
<dbReference type="PhosphoSitePlus" id="P16104"/>
<dbReference type="SwissPalm" id="P16104"/>
<dbReference type="BioMuta" id="H2AFX"/>
<dbReference type="DMDM" id="121992"/>
<dbReference type="jPOST" id="P16104"/>
<dbReference type="MassIVE" id="P16104"/>
<dbReference type="PaxDb" id="9606-ENSP00000434024"/>
<dbReference type="PeptideAtlas" id="P16104"/>
<dbReference type="ProteomicsDB" id="53286"/>
<dbReference type="Pumba" id="P16104"/>
<dbReference type="TopDownProteomics" id="P16104"/>
<dbReference type="ABCD" id="P16104">
    <property type="antibodies" value="4 sequenced antibodies"/>
</dbReference>
<dbReference type="Antibodypedia" id="3220">
    <property type="antibodies" value="1591 antibodies from 47 providers"/>
</dbReference>
<dbReference type="DNASU" id="3014"/>
<dbReference type="Ensembl" id="ENST00000375167.1">
    <property type="protein sequence ID" value="ENSP00000364310.1"/>
    <property type="gene ID" value="ENSG00000188486.4"/>
</dbReference>
<dbReference type="Ensembl" id="ENST00000530167.2">
    <property type="protein sequence ID" value="ENSP00000434024.1"/>
    <property type="gene ID" value="ENSG00000188486.4"/>
</dbReference>
<dbReference type="GeneID" id="3014"/>
<dbReference type="KEGG" id="hsa:3014"/>
<dbReference type="MANE-Select" id="ENST00000530167.2">
    <property type="protein sequence ID" value="ENSP00000434024.1"/>
    <property type="RefSeq nucleotide sequence ID" value="NM_002105.3"/>
    <property type="RefSeq protein sequence ID" value="NP_002096.1"/>
</dbReference>
<dbReference type="UCSC" id="uc001pvg.4">
    <property type="organism name" value="human"/>
</dbReference>
<dbReference type="AGR" id="HGNC:4739"/>
<dbReference type="CTD" id="3014"/>
<dbReference type="DisGeNET" id="3014"/>
<dbReference type="GeneCards" id="H2AX"/>
<dbReference type="HGNC" id="HGNC:4739">
    <property type="gene designation" value="H2AX"/>
</dbReference>
<dbReference type="HPA" id="ENSG00000188486">
    <property type="expression patterns" value="Low tissue specificity"/>
</dbReference>
<dbReference type="MIM" id="601772">
    <property type="type" value="gene"/>
</dbReference>
<dbReference type="neXtProt" id="NX_P16104"/>
<dbReference type="OpenTargets" id="ENSG00000188486"/>
<dbReference type="PharmGKB" id="PA29116"/>
<dbReference type="VEuPathDB" id="HostDB:ENSG00000188486"/>
<dbReference type="eggNOG" id="KOG1756">
    <property type="taxonomic scope" value="Eukaryota"/>
</dbReference>
<dbReference type="GeneTree" id="ENSGT01020000230360"/>
<dbReference type="HOGENOM" id="CLU_062828_3_1_1"/>
<dbReference type="InParanoid" id="P16104"/>
<dbReference type="OMA" id="HKKTRIN"/>
<dbReference type="OrthoDB" id="9421954at2759"/>
<dbReference type="PAN-GO" id="P16104">
    <property type="GO annotations" value="2 GO annotations based on evolutionary models"/>
</dbReference>
<dbReference type="PhylomeDB" id="P16104"/>
<dbReference type="TreeFam" id="TF300137"/>
<dbReference type="PathwayCommons" id="P16104"/>
<dbReference type="Reactome" id="R-HSA-110328">
    <property type="pathway name" value="Recognition and association of DNA glycosylase with site containing an affected pyrimidine"/>
</dbReference>
<dbReference type="Reactome" id="R-HSA-110329">
    <property type="pathway name" value="Cleavage of the damaged pyrimidine"/>
</dbReference>
<dbReference type="Reactome" id="R-HSA-110330">
    <property type="pathway name" value="Recognition and association of DNA glycosylase with site containing an affected purine"/>
</dbReference>
<dbReference type="Reactome" id="R-HSA-110331">
    <property type="pathway name" value="Cleavage of the damaged purine"/>
</dbReference>
<dbReference type="Reactome" id="R-HSA-1221632">
    <property type="pathway name" value="Meiotic synapsis"/>
</dbReference>
<dbReference type="Reactome" id="R-HSA-171306">
    <property type="pathway name" value="Packaging Of Telomere Ends"/>
</dbReference>
<dbReference type="Reactome" id="R-HSA-1912408">
    <property type="pathway name" value="Pre-NOTCH Transcription and Translation"/>
</dbReference>
<dbReference type="Reactome" id="R-HSA-201722">
    <property type="pathway name" value="Formation of the beta-catenin:TCF transactivating complex"/>
</dbReference>
<dbReference type="Reactome" id="R-HSA-212300">
    <property type="pathway name" value="PRC2 methylates histones and DNA"/>
</dbReference>
<dbReference type="Reactome" id="R-HSA-2299718">
    <property type="pathway name" value="Condensation of Prophase Chromosomes"/>
</dbReference>
<dbReference type="Reactome" id="R-HSA-2559580">
    <property type="pathway name" value="Oxidative Stress Induced Senescence"/>
</dbReference>
<dbReference type="Reactome" id="R-HSA-2559582">
    <property type="pathway name" value="Senescence-Associated Secretory Phenotype (SASP)"/>
</dbReference>
<dbReference type="Reactome" id="R-HSA-2559586">
    <property type="pathway name" value="DNA Damage/Telomere Stress Induced Senescence"/>
</dbReference>
<dbReference type="Reactome" id="R-HSA-3214858">
    <property type="pathway name" value="RMTs methylate histone arginines"/>
</dbReference>
<dbReference type="Reactome" id="R-HSA-427359">
    <property type="pathway name" value="SIRT1 negatively regulates rRNA expression"/>
</dbReference>
<dbReference type="Reactome" id="R-HSA-427389">
    <property type="pathway name" value="ERCC6 (CSB) and EHMT2 (G9a) positively regulate rRNA expression"/>
</dbReference>
<dbReference type="Reactome" id="R-HSA-427413">
    <property type="pathway name" value="NoRC negatively regulates rRNA expression"/>
</dbReference>
<dbReference type="Reactome" id="R-HSA-5250924">
    <property type="pathway name" value="B-WICH complex positively regulates rRNA expression"/>
</dbReference>
<dbReference type="Reactome" id="R-HSA-5334118">
    <property type="pathway name" value="DNA methylation"/>
</dbReference>
<dbReference type="Reactome" id="R-HSA-5578749">
    <property type="pathway name" value="Transcriptional regulation by small RNAs"/>
</dbReference>
<dbReference type="Reactome" id="R-HSA-5617472">
    <property type="pathway name" value="Activation of anterior HOX genes in hindbrain development during early embryogenesis"/>
</dbReference>
<dbReference type="Reactome" id="R-HSA-5625886">
    <property type="pathway name" value="Activated PKN1 stimulates transcription of AR (androgen receptor) regulated genes KLK2 and KLK3"/>
</dbReference>
<dbReference type="Reactome" id="R-HSA-5693565">
    <property type="pathway name" value="Recruitment and ATM-mediated phosphorylation of repair and signaling proteins at DNA double strand breaks"/>
</dbReference>
<dbReference type="Reactome" id="R-HSA-5693571">
    <property type="pathway name" value="Nonhomologous End-Joining (NHEJ)"/>
</dbReference>
<dbReference type="Reactome" id="R-HSA-5693607">
    <property type="pathway name" value="Processing of DNA double-strand break ends"/>
</dbReference>
<dbReference type="Reactome" id="R-HSA-606279">
    <property type="pathway name" value="Deposition of new CENPA-containing nucleosomes at the centromere"/>
</dbReference>
<dbReference type="Reactome" id="R-HSA-68616">
    <property type="pathway name" value="Assembly of the ORC complex at the origin of replication"/>
</dbReference>
<dbReference type="Reactome" id="R-HSA-69473">
    <property type="pathway name" value="G2/M DNA damage checkpoint"/>
</dbReference>
<dbReference type="Reactome" id="R-HSA-73728">
    <property type="pathway name" value="RNA Polymerase I Promoter Opening"/>
</dbReference>
<dbReference type="Reactome" id="R-HSA-73772">
    <property type="pathway name" value="RNA Polymerase I Promoter Escape"/>
</dbReference>
<dbReference type="Reactome" id="R-HSA-8936459">
    <property type="pathway name" value="RUNX1 regulates genes involved in megakaryocyte differentiation and platelet function"/>
</dbReference>
<dbReference type="Reactome" id="R-HSA-8939236">
    <property type="pathway name" value="RUNX1 regulates transcription of genes involved in differentiation of HSCs"/>
</dbReference>
<dbReference type="Reactome" id="R-HSA-9018519">
    <property type="pathway name" value="Estrogen-dependent gene expression"/>
</dbReference>
<dbReference type="Reactome" id="R-HSA-912446">
    <property type="pathway name" value="Meiotic recombination"/>
</dbReference>
<dbReference type="Reactome" id="R-HSA-9616222">
    <property type="pathway name" value="Transcriptional regulation of granulopoiesis"/>
</dbReference>
<dbReference type="Reactome" id="R-HSA-9670095">
    <property type="pathway name" value="Inhibition of DNA recombination at telomere"/>
</dbReference>
<dbReference type="Reactome" id="R-HSA-9710421">
    <property type="pathway name" value="Defective pyroptosis"/>
</dbReference>
<dbReference type="Reactome" id="R-HSA-977225">
    <property type="pathway name" value="Amyloid fiber formation"/>
</dbReference>
<dbReference type="Reactome" id="R-HSA-9821002">
    <property type="pathway name" value="Chromatin modifications during the maternal to zygotic transition (MZT)"/>
</dbReference>
<dbReference type="Reactome" id="R-HSA-9821993">
    <property type="pathway name" value="Replacement of protamines by nucleosomes in the male pronucleus"/>
</dbReference>
<dbReference type="Reactome" id="R-HSA-9841922">
    <property type="pathway name" value="MLL4 and MLL3 complexes regulate expression of PPARG target genes in adipogenesis and hepatic steatosis"/>
</dbReference>
<dbReference type="Reactome" id="R-HSA-9843940">
    <property type="pathway name" value="Regulation of endogenous retroelements by KRAB-ZFP proteins"/>
</dbReference>
<dbReference type="Reactome" id="R-HSA-9843970">
    <property type="pathway name" value="Regulation of endogenous retroelements by the Human Silencing Hub (HUSH) complex"/>
</dbReference>
<dbReference type="Reactome" id="R-HSA-9845323">
    <property type="pathway name" value="Regulation of endogenous retroelements by Piwi-interacting RNAs (piRNAs)"/>
</dbReference>
<dbReference type="SignaLink" id="P16104"/>
<dbReference type="SIGNOR" id="P16104"/>
<dbReference type="BioGRID-ORCS" id="3014">
    <property type="hits" value="316 hits in 1161 CRISPR screens"/>
</dbReference>
<dbReference type="CD-CODE" id="15E34471">
    <property type="entry name" value="Synthetic Condensate 000334"/>
</dbReference>
<dbReference type="CD-CODE" id="8C2F96ED">
    <property type="entry name" value="Centrosome"/>
</dbReference>
<dbReference type="CD-CODE" id="91857CE7">
    <property type="entry name" value="Nucleolus"/>
</dbReference>
<dbReference type="CD-CODE" id="A0DCDA94">
    <property type="entry name" value="DNA damage foci"/>
</dbReference>
<dbReference type="CD-CODE" id="B5B9A610">
    <property type="entry name" value="PML body"/>
</dbReference>
<dbReference type="CD-CODE" id="DEE660B4">
    <property type="entry name" value="Stress granule"/>
</dbReference>
<dbReference type="ChiTaRS" id="H2AFX">
    <property type="organism name" value="human"/>
</dbReference>
<dbReference type="EvolutionaryTrace" id="P16104"/>
<dbReference type="GeneWiki" id="H2AFX"/>
<dbReference type="GenomeRNAi" id="3014"/>
<dbReference type="Pharos" id="P16104">
    <property type="development level" value="Tbio"/>
</dbReference>
<dbReference type="PRO" id="PR:P16104"/>
<dbReference type="Proteomes" id="UP000005640">
    <property type="component" value="Chromosome 11"/>
</dbReference>
<dbReference type="RNAct" id="P16104">
    <property type="molecule type" value="protein"/>
</dbReference>
<dbReference type="Bgee" id="ENSG00000188486">
    <property type="expression patterns" value="Expressed in ventricular zone and 195 other cell types or tissues"/>
</dbReference>
<dbReference type="GO" id="GO:0005813">
    <property type="term" value="C:centrosome"/>
    <property type="evidence" value="ECO:0000314"/>
    <property type="project" value="UniProtKB"/>
</dbReference>
<dbReference type="GO" id="GO:0000794">
    <property type="term" value="C:condensed nuclear chromosome"/>
    <property type="evidence" value="ECO:0007669"/>
    <property type="project" value="Ensembl"/>
</dbReference>
<dbReference type="GO" id="GO:0070062">
    <property type="term" value="C:extracellular exosome"/>
    <property type="evidence" value="ECO:0007005"/>
    <property type="project" value="UniProtKB"/>
</dbReference>
<dbReference type="GO" id="GO:0001673">
    <property type="term" value="C:male germ cell nucleus"/>
    <property type="evidence" value="ECO:0007669"/>
    <property type="project" value="Ensembl"/>
</dbReference>
<dbReference type="GO" id="GO:0016607">
    <property type="term" value="C:nuclear speck"/>
    <property type="evidence" value="ECO:0000314"/>
    <property type="project" value="HPA"/>
</dbReference>
<dbReference type="GO" id="GO:0005654">
    <property type="term" value="C:nucleoplasm"/>
    <property type="evidence" value="ECO:0000314"/>
    <property type="project" value="HPA"/>
</dbReference>
<dbReference type="GO" id="GO:0000786">
    <property type="term" value="C:nucleosome"/>
    <property type="evidence" value="ECO:0000318"/>
    <property type="project" value="GO_Central"/>
</dbReference>
<dbReference type="GO" id="GO:0005634">
    <property type="term" value="C:nucleus"/>
    <property type="evidence" value="ECO:0000314"/>
    <property type="project" value="UniProtKB"/>
</dbReference>
<dbReference type="GO" id="GO:0005657">
    <property type="term" value="C:replication fork"/>
    <property type="evidence" value="ECO:0007669"/>
    <property type="project" value="Ensembl"/>
</dbReference>
<dbReference type="GO" id="GO:0090734">
    <property type="term" value="C:site of DNA damage"/>
    <property type="evidence" value="ECO:0000315"/>
    <property type="project" value="UniProtKB"/>
</dbReference>
<dbReference type="GO" id="GO:0035861">
    <property type="term" value="C:site of double-strand break"/>
    <property type="evidence" value="ECO:0000314"/>
    <property type="project" value="MGI"/>
</dbReference>
<dbReference type="GO" id="GO:0001741">
    <property type="term" value="C:XY body"/>
    <property type="evidence" value="ECO:0007669"/>
    <property type="project" value="Ensembl"/>
</dbReference>
<dbReference type="GO" id="GO:0140463">
    <property type="term" value="F:chromatin-protein adaptor activity"/>
    <property type="evidence" value="ECO:0000314"/>
    <property type="project" value="UniProt"/>
</dbReference>
<dbReference type="GO" id="GO:0003684">
    <property type="term" value="F:damaged DNA binding"/>
    <property type="evidence" value="ECO:0007669"/>
    <property type="project" value="Ensembl"/>
</dbReference>
<dbReference type="GO" id="GO:0003677">
    <property type="term" value="F:DNA binding"/>
    <property type="evidence" value="ECO:0000303"/>
    <property type="project" value="UniProtKB"/>
</dbReference>
<dbReference type="GO" id="GO:0019899">
    <property type="term" value="F:enzyme binding"/>
    <property type="evidence" value="ECO:0000353"/>
    <property type="project" value="UniProtKB"/>
</dbReference>
<dbReference type="GO" id="GO:0042393">
    <property type="term" value="F:histone binding"/>
    <property type="evidence" value="ECO:0000353"/>
    <property type="project" value="UniProtKB"/>
</dbReference>
<dbReference type="GO" id="GO:0046982">
    <property type="term" value="F:protein heterodimerization activity"/>
    <property type="evidence" value="ECO:0007669"/>
    <property type="project" value="InterPro"/>
</dbReference>
<dbReference type="GO" id="GO:0030527">
    <property type="term" value="F:structural constituent of chromatin"/>
    <property type="evidence" value="ECO:0000318"/>
    <property type="project" value="GO_Central"/>
</dbReference>
<dbReference type="GO" id="GO:0000077">
    <property type="term" value="P:DNA damage checkpoint signaling"/>
    <property type="evidence" value="ECO:0000314"/>
    <property type="project" value="UniProtKB"/>
</dbReference>
<dbReference type="GO" id="GO:0006974">
    <property type="term" value="P:DNA damage response"/>
    <property type="evidence" value="ECO:0000314"/>
    <property type="project" value="BHF-UCL"/>
</dbReference>
<dbReference type="GO" id="GO:0006302">
    <property type="term" value="P:double-strand break repair"/>
    <property type="evidence" value="ECO:0000303"/>
    <property type="project" value="UniProtKB"/>
</dbReference>
<dbReference type="GO" id="GO:0000724">
    <property type="term" value="P:double-strand break repair via homologous recombination"/>
    <property type="evidence" value="ECO:0007669"/>
    <property type="project" value="Ensembl"/>
</dbReference>
<dbReference type="GO" id="GO:0031507">
    <property type="term" value="P:heterochromatin formation"/>
    <property type="evidence" value="ECO:0000318"/>
    <property type="project" value="GO_Central"/>
</dbReference>
<dbReference type="GO" id="GO:0051321">
    <property type="term" value="P:meiotic cell cycle"/>
    <property type="evidence" value="ECO:0007669"/>
    <property type="project" value="UniProtKB-KW"/>
</dbReference>
<dbReference type="GO" id="GO:0006334">
    <property type="term" value="P:nucleosome assembly"/>
    <property type="evidence" value="ECO:0000303"/>
    <property type="project" value="UniProtKB"/>
</dbReference>
<dbReference type="GO" id="GO:0045739">
    <property type="term" value="P:positive regulation of DNA repair"/>
    <property type="evidence" value="ECO:0000303"/>
    <property type="project" value="UniProtKB"/>
</dbReference>
<dbReference type="GO" id="GO:1990166">
    <property type="term" value="P:protein localization to site of double-strand break"/>
    <property type="evidence" value="ECO:0000314"/>
    <property type="project" value="UniProt"/>
</dbReference>
<dbReference type="GO" id="GO:0010212">
    <property type="term" value="P:response to ionizing radiation"/>
    <property type="evidence" value="ECO:0000303"/>
    <property type="project" value="UniProtKB"/>
</dbReference>
<dbReference type="GO" id="GO:0007283">
    <property type="term" value="P:spermatogenesis"/>
    <property type="evidence" value="ECO:0007669"/>
    <property type="project" value="Ensembl"/>
</dbReference>
<dbReference type="CDD" id="cd00074">
    <property type="entry name" value="HFD_H2A"/>
    <property type="match status" value="1"/>
</dbReference>
<dbReference type="FunFam" id="1.10.20.10:FF:000004">
    <property type="entry name" value="Histone H2A"/>
    <property type="match status" value="1"/>
</dbReference>
<dbReference type="Gene3D" id="1.10.20.10">
    <property type="entry name" value="Histone, subunit A"/>
    <property type="match status" value="1"/>
</dbReference>
<dbReference type="IDEAL" id="IID00027"/>
<dbReference type="InterPro" id="IPR009072">
    <property type="entry name" value="Histone-fold"/>
</dbReference>
<dbReference type="InterPro" id="IPR002119">
    <property type="entry name" value="Histone_H2A"/>
</dbReference>
<dbReference type="InterPro" id="IPR007125">
    <property type="entry name" value="Histone_H2A/H2B/H3"/>
</dbReference>
<dbReference type="InterPro" id="IPR032454">
    <property type="entry name" value="Histone_H2A_C"/>
</dbReference>
<dbReference type="InterPro" id="IPR032458">
    <property type="entry name" value="Histone_H2A_CS"/>
</dbReference>
<dbReference type="PANTHER" id="PTHR23430">
    <property type="entry name" value="HISTONE H2A"/>
    <property type="match status" value="1"/>
</dbReference>
<dbReference type="Pfam" id="PF00125">
    <property type="entry name" value="Histone"/>
    <property type="match status" value="1"/>
</dbReference>
<dbReference type="Pfam" id="PF16211">
    <property type="entry name" value="Histone_H2A_C"/>
    <property type="match status" value="1"/>
</dbReference>
<dbReference type="PRINTS" id="PR00620">
    <property type="entry name" value="HISTONEH2A"/>
</dbReference>
<dbReference type="SMART" id="SM00414">
    <property type="entry name" value="H2A"/>
    <property type="match status" value="1"/>
</dbReference>
<dbReference type="SUPFAM" id="SSF47113">
    <property type="entry name" value="Histone-fold"/>
    <property type="match status" value="1"/>
</dbReference>
<dbReference type="PROSITE" id="PS00046">
    <property type="entry name" value="HISTONE_H2A"/>
    <property type="match status" value="1"/>
</dbReference>
<keyword id="KW-0002">3D-structure</keyword>
<keyword id="KW-0007">Acetylation</keyword>
<keyword id="KW-0131">Cell cycle</keyword>
<keyword id="KW-0158">Chromosome</keyword>
<keyword id="KW-0227">DNA damage</keyword>
<keyword id="KW-0233">DNA recombination</keyword>
<keyword id="KW-0234">DNA repair</keyword>
<keyword id="KW-0238">DNA-binding</keyword>
<keyword id="KW-0945">Host-virus interaction</keyword>
<keyword id="KW-1017">Isopeptide bond</keyword>
<keyword id="KW-0469">Meiosis</keyword>
<keyword id="KW-0544">Nucleosome core</keyword>
<keyword id="KW-0539">Nucleus</keyword>
<keyword id="KW-0597">Phosphoprotein</keyword>
<keyword id="KW-1267">Proteomics identification</keyword>
<keyword id="KW-1185">Reference proteome</keyword>
<keyword id="KW-0832">Ubl conjugation</keyword>
<name>H2AX_HUMAN</name>
<accession>P16104</accession>
<accession>Q4ZGJ7</accession>
<accession>Q6IAS5</accession>
<feature type="initiator methionine" description="Removed" evidence="2">
    <location>
        <position position="1"/>
    </location>
</feature>
<feature type="chain" id="PRO_0000055242" description="Histone H2AX">
    <location>
        <begin position="2"/>
        <end position="143"/>
    </location>
</feature>
<feature type="region of interest" description="Disordered" evidence="3">
    <location>
        <begin position="1"/>
        <end position="22"/>
    </location>
</feature>
<feature type="region of interest" description="Disordered" evidence="3">
    <location>
        <begin position="121"/>
        <end position="143"/>
    </location>
</feature>
<feature type="short sequence motif" description="[ST]-Q motif">
    <location>
        <begin position="140"/>
        <end position="141"/>
    </location>
</feature>
<feature type="compositionally biased region" description="Basic residues" evidence="3">
    <location>
        <begin position="7"/>
        <end position="19"/>
    </location>
</feature>
<feature type="modified residue" description="N-acetylserine" evidence="2">
    <location>
        <position position="2"/>
    </location>
</feature>
<feature type="modified residue" description="Phosphoserine" evidence="2">
    <location>
        <position position="2"/>
    </location>
</feature>
<feature type="modified residue" description="N6-acetyllysine" evidence="18 28">
    <location>
        <position position="6"/>
    </location>
</feature>
<feature type="modified residue" description="N6-acetyllysine" evidence="2">
    <location>
        <position position="10"/>
    </location>
</feature>
<feature type="modified residue" description="N6-lactoyllysine; alternate" evidence="1">
    <location>
        <position position="10"/>
    </location>
</feature>
<feature type="modified residue" description="N6-acetyllysine" evidence="2">
    <location>
        <position position="37"/>
    </location>
</feature>
<feature type="modified residue" description="Phosphoserine" evidence="2">
    <location>
        <position position="122"/>
    </location>
</feature>
<feature type="modified residue" description="Phosphoserine; by ATM, ATR and PRKDC" evidence="4 5 6 7 8 9 10 11 12 13 15 16 18 25 34 37 38 39">
    <location>
        <position position="140"/>
    </location>
</feature>
<feature type="modified residue" description="Phosphotyrosine; by WSTF" evidence="21 24">
    <location>
        <position position="143"/>
    </location>
</feature>
<feature type="cross-link" description="Glycyl lysine isopeptide (Lys-Gly) (interchain with G-Cter in ubiquitin)" evidence="26">
    <location>
        <position position="14"/>
    </location>
</feature>
<feature type="cross-link" description="Glycyl lysine isopeptide (Lys-Gly) (interchain with G-Cter in ubiquitin)" evidence="26">
    <location>
        <position position="16"/>
    </location>
</feature>
<feature type="cross-link" description="Glycyl lysine isopeptide (Lys-Gly) (interchain with G-Cter in ubiquitin)" evidence="18">
    <location>
        <position position="120"/>
    </location>
</feature>
<feature type="cross-link" description="Glycyl lysine isopeptide (Lys-Gly) (interchain with G-Cter in SUMO2)" evidence="41">
    <location>
        <position position="128"/>
    </location>
</feature>
<feature type="cross-link" description="Glycyl lysine isopeptide (Lys-Gly) (interchain with G-Cter in SUMO2)" evidence="40 41">
    <location>
        <position position="135"/>
    </location>
</feature>
<feature type="mutagenesis site" description="Decreased acetylation and reduced H2AXK119ub ubiquitination." evidence="18">
    <original>K</original>
    <variation>R</variation>
    <location>
        <position position="6"/>
    </location>
</feature>
<feature type="mutagenesis site" description="Impaired phosphorylation without affecting H2AXK5ac acetylation." evidence="18">
    <original>S</original>
    <variation>A</variation>
    <location>
        <position position="140"/>
    </location>
</feature>
<feature type="mutagenesis site" description="Reduced phosphorylation of S-140 in response to DNA damage." evidence="34">
    <original>Q</original>
    <variation>N</variation>
    <location>
        <position position="141"/>
    </location>
</feature>
<feature type="mutagenesis site" description="Displays a reduced apoptotic response. S-140 phosphorylation is reduced." evidence="21 24">
    <original>Y</original>
    <variation>F</variation>
    <location>
        <position position="143"/>
    </location>
</feature>
<feature type="sequence conflict" description="In Ref. 2; CAG33360." evidence="35" ref="2">
    <original>R</original>
    <variation>L</variation>
    <location>
        <position position="78"/>
    </location>
</feature>
<feature type="helix" evidence="43">
    <location>
        <begin position="18"/>
        <end position="22"/>
    </location>
</feature>
<feature type="helix" evidence="43">
    <location>
        <begin position="28"/>
        <end position="37"/>
    </location>
</feature>
<feature type="strand" evidence="43">
    <location>
        <begin position="42"/>
        <end position="44"/>
    </location>
</feature>
<feature type="helix" evidence="43">
    <location>
        <begin position="47"/>
        <end position="73"/>
    </location>
</feature>
<feature type="strand" evidence="43">
    <location>
        <begin position="77"/>
        <end position="79"/>
    </location>
</feature>
<feature type="helix" evidence="43">
    <location>
        <begin position="81"/>
        <end position="90"/>
    </location>
</feature>
<feature type="helix" evidence="43">
    <location>
        <begin position="92"/>
        <end position="97"/>
    </location>
</feature>
<feature type="turn" evidence="43">
    <location>
        <begin position="98"/>
        <end position="100"/>
    </location>
</feature>
<feature type="strand" evidence="42">
    <location>
        <begin position="101"/>
        <end position="103"/>
    </location>
</feature>
<feature type="helix" evidence="43">
    <location>
        <begin position="114"/>
        <end position="116"/>
    </location>
</feature>
<feature type="strand" evidence="44">
    <location>
        <begin position="141"/>
        <end position="143"/>
    </location>
</feature>
<organism>
    <name type="scientific">Homo sapiens</name>
    <name type="common">Human</name>
    <dbReference type="NCBI Taxonomy" id="9606"/>
    <lineage>
        <taxon>Eukaryota</taxon>
        <taxon>Metazoa</taxon>
        <taxon>Chordata</taxon>
        <taxon>Craniata</taxon>
        <taxon>Vertebrata</taxon>
        <taxon>Euteleostomi</taxon>
        <taxon>Mammalia</taxon>
        <taxon>Eutheria</taxon>
        <taxon>Euarchontoglires</taxon>
        <taxon>Primates</taxon>
        <taxon>Haplorrhini</taxon>
        <taxon>Catarrhini</taxon>
        <taxon>Hominidae</taxon>
        <taxon>Homo</taxon>
    </lineage>
</organism>
<comment type="function">
    <text evidence="6 8 9 14 18 28">Variant histone H2A which replaces conventional H2A in a subset of nucleosomes. Nucleosomes wrap and compact DNA into chromatin, limiting DNA accessibility to the cellular machineries which require DNA as a template. Histones thereby play a central role in transcription regulation, DNA repair, DNA replication and chromosomal stability. DNA accessibility is regulated via a complex set of post-translational modifications of histones, also called histone code, and nucleosome remodeling. Required for checkpoint-mediated arrest of cell cycle progression in response to low doses of ionizing radiation and for efficient repair of DNA double strand breaks (DSBs) specifically when modified by C-terminal phosphorylation.</text>
</comment>
<comment type="subunit">
    <text evidence="8 9 14 16 17 29 30 31 33 35">The nucleosome is a histone octamer containing two molecules each of H2A, H2B, H3 and H4 assembled in one H3-H4 heterotetramer and two H2A-H2B heterodimers. The octamer wraps approximately 147 bp of DNA (Probable). Interacts with numerous proteins required for DNA damage signaling and repair when phosphorylated on Ser-140 (PubMed:12419185, PubMed:12607005, PubMed:15201865). These include MDC1, TP53BP1, BRCA1 and the MRN complex, composed of MRE11, RAD50, and NBN (PubMed:12419185, PubMed:12607005, PubMed:15201865). Interaction with the MRN complex is mediated at least in part by NBN (PubMed:12419185). Also interacts with DHX9/NDHII when phosphorylated on Ser-140 and MCPH1 when phosphorylated at Ser-140 or Tyr-143 (PubMed:15613478). Interacts with ARRB2; the interaction is detected in the nucleus upon OR1D2 stimulation (PubMed:16820410). Interacts with WRAP53/TCAB1 (PubMed:26734725, PubMed:27715493). Interacts with HDGFL2 (PubMed:26721387). Interacts with DNA damage up-regulated protein DDUP (PubMed:35849344). Forms a complex with DDUP and RAD18 following DDUP phosphorylation (PubMed:35849344).</text>
</comment>
<comment type="subunit">
    <text evidence="27">(Microbial infection) Interacts with Epstein-Barr virus protein EBNA6.</text>
</comment>
<comment type="interaction">
    <interactant intactId="EBI-494830">
        <id>P16104</id>
    </interactant>
    <interactant intactId="EBI-349905">
        <id>P38398</id>
        <label>BRCA1</label>
    </interactant>
    <organismsDiffer>false</organismsDiffer>
    <experiments>4</experiments>
</comment>
<comment type="interaction">
    <interactant intactId="EBI-494830">
        <id>P16104</id>
    </interactant>
    <interactant intactId="EBI-4409942">
        <id>P58876</id>
        <label>H2BC5</label>
    </interactant>
    <organismsDiffer>false</organismsDiffer>
    <experiments>3</experiments>
</comment>
<comment type="interaction">
    <interactant intactId="EBI-494830">
        <id>P16104</id>
    </interactant>
    <interactant intactId="EBI-358900">
        <id>Q16695</id>
        <label>H3-4</label>
    </interactant>
    <organismsDiffer>false</organismsDiffer>
    <experiments>12</experiments>
</comment>
<comment type="interaction">
    <interactant intactId="EBI-494830">
        <id>P16104</id>
    </interactant>
    <interactant intactId="EBI-302023">
        <id>P62805</id>
        <label>H4C9</label>
    </interactant>
    <organismsDiffer>false</organismsDiffer>
    <experiments>7</experiments>
</comment>
<comment type="interaction">
    <interactant intactId="EBI-494830">
        <id>P16104</id>
    </interactant>
    <interactant intactId="EBI-351935">
        <id>P02545</id>
        <label>LMNA</label>
    </interactant>
    <organismsDiffer>false</organismsDiffer>
    <experiments>3</experiments>
</comment>
<comment type="interaction">
    <interactant intactId="EBI-494830">
        <id>P16104</id>
    </interactant>
    <interactant intactId="EBI-286483">
        <id>P45983</id>
        <label>MAPK8</label>
    </interactant>
    <organismsDiffer>false</organismsDiffer>
    <experiments>3</experiments>
</comment>
<comment type="interaction">
    <interactant intactId="EBI-494830">
        <id>P16104</id>
    </interactant>
    <interactant intactId="EBI-495644">
        <id>Q14676</id>
        <label>MDC1</label>
    </interactant>
    <organismsDiffer>false</organismsDiffer>
    <experiments>21</experiments>
</comment>
<comment type="interaction">
    <interactant intactId="EBI-494830">
        <id>P16104</id>
    </interactant>
    <interactant intactId="EBI-396513">
        <id>P49959</id>
        <label>MRE11</label>
    </interactant>
    <organismsDiffer>false</organismsDiffer>
    <experiments>7</experiments>
</comment>
<comment type="interaction">
    <interactant intactId="EBI-494830">
        <id>P16104</id>
    </interactant>
    <interactant intactId="EBI-494844">
        <id>O60934</id>
        <label>NBN</label>
    </interactant>
    <organismsDiffer>false</organismsDiffer>
    <experiments>14</experiments>
</comment>
<comment type="interaction">
    <interactant intactId="EBI-494830">
        <id>P16104</id>
    </interactant>
    <interactant intactId="EBI-7521368">
        <id>Q6ZW49-1</id>
        <label>PAXIP1</label>
    </interactant>
    <organismsDiffer>false</organismsDiffer>
    <experiments>7</experiments>
</comment>
<comment type="interaction">
    <interactant intactId="EBI-494830">
        <id>P16104</id>
    </interactant>
    <interactant intactId="EBI-1551512">
        <id>O15297</id>
        <label>PPM1D</label>
    </interactant>
    <organismsDiffer>false</organismsDiffer>
    <experiments>3</experiments>
</comment>
<comment type="interaction">
    <interactant intactId="EBI-494830">
        <id>P16104</id>
    </interactant>
    <interactant intactId="EBI-302489">
        <id>P51532</id>
        <label>SMARCA4</label>
    </interactant>
    <organismsDiffer>false</organismsDiffer>
    <experiments>9</experiments>
</comment>
<comment type="interaction">
    <interactant intactId="EBI-494830">
        <id>P16104</id>
    </interactant>
    <interactant intactId="EBI-706637">
        <id>Q15554</id>
        <label>TERF2</label>
    </interactant>
    <organismsDiffer>false</organismsDiffer>
    <experiments>4</experiments>
</comment>
<comment type="interaction">
    <interactant intactId="EBI-494830">
        <id>P16104</id>
    </interactant>
    <interactant intactId="EBI-396540">
        <id>Q12888</id>
        <label>TP53BP1</label>
    </interactant>
    <organismsDiffer>false</organismsDiffer>
    <experiments>6</experiments>
</comment>
<comment type="interaction">
    <interactant intactId="EBI-494830">
        <id>P16104</id>
    </interactant>
    <interactant intactId="EBI-1769146">
        <id>Q99986</id>
        <label>VRK1</label>
    </interactant>
    <organismsDiffer>false</organismsDiffer>
    <experiments>3</experiments>
</comment>
<comment type="interaction">
    <interactant intactId="EBI-494830">
        <id>P16104</id>
    </interactant>
    <interactant intactId="EBI-5326677">
        <id>PRO_0000022031</id>
        <label>Aifm1</label>
        <dbReference type="UniProtKB" id="Q9Z0X1"/>
    </interactant>
    <organismsDiffer>true</organismsDiffer>
    <experiments>2</experiments>
</comment>
<comment type="interaction">
    <interactant intactId="EBI-494830">
        <id>P16104</id>
    </interactant>
    <interactant intactId="EBI-15759525">
        <id>P46933-1</id>
        <label>Apbb1</label>
    </interactant>
    <organismsDiffer>true</organismsDiffer>
    <experiments>2</experiments>
</comment>
<comment type="interaction">
    <interactant intactId="EBI-494830">
        <id>P16104</id>
    </interactant>
    <interactant intactId="EBI-15759383">
        <id>Q6P4T3</id>
        <label>Eya3</label>
    </interactant>
    <organismsDiffer>true</organismsDiffer>
    <experiments>2</experiments>
</comment>
<comment type="subcellular location">
    <subcellularLocation>
        <location evidence="8 10 11 16 27">Nucleus</location>
    </subcellularLocation>
    <subcellularLocation>
        <location evidence="6 7 9 10 13 14 16">Chromosome</location>
    </subcellularLocation>
</comment>
<comment type="developmental stage">
    <text>Synthesized in G1 as well as in S-phase.</text>
</comment>
<comment type="domain">
    <text>The [ST]-Q motif constitutes a recognition sequence for kinases from the PI3/PI4-kinase family.</text>
</comment>
<comment type="PTM">
    <text evidence="4 5 6 7 8 9 10 11 12 13 15 16 18 21 24 25 32 34">Phosphorylated by VRK1 (PubMed:31527692). Phosphorylated on Ser-140 (to form gamma-H2AX or H2AX139ph) in response to DNA double strand breaks (DSBs) generated by exogenous genotoxic agents and by stalled replication forks, and may also occur during meiotic recombination events and immunoglobulin class switching in lymphocytes. Phosphorylation can extend up to several thousand nucleosomes from the actual site of the DSB and may mark the surrounding chromatin for recruitment of proteins required for DNA damage signaling and repair. Widespread phosphorylation may also serve to amplify the damage signal or aid repair of persistent lesions. Phosphorylation of Ser-140 (H2AX139ph) in response to ionizing radiation is mediated by both ATM and PRKDC while defects in DNA replication induce Ser-140 phosphorylation (H2AX139ph) subsequent to activation of ATR and PRKDC. Dephosphorylation of Ser-140 by PP2A is required for DNA DSB repair. In meiosis, Ser-140 phosphorylation (H2AX139ph) may occur at synaptonemal complexes during leptotene as an ATM-dependent response to the formation of programmed DSBs by SPO11. Ser-140 phosphorylation (H2AX139ph) may subsequently occurs at unsynapsed regions of both autosomes and the XY bivalent during zygotene, downstream of ATR and BRCA1 activation. Ser-140 phosphorylation (H2AX139ph) may also be required for transcriptional repression of unsynapsed chromatin and meiotic sex chromosome inactivation (MSCI), whereby the X and Y chromosomes condense in pachytene to form the heterochromatic XY-body. During immunoglobulin class switch recombination in lymphocytes, Ser-140 phosphorylation (H2AX139ph) may occur at sites of DNA-recombination subsequent to activation of the activation-induced cytidine deaminase AICDA. Phosphorylation at Tyr-143 (H2AXY142ph) by BAZ1B/WSTF determines the relative recruitment of either DNA repair or pro-apoptotic factors. Phosphorylation at Tyr-143 (H2AXY142ph) favors the recruitment of APBB1/FE65 and pro-apoptosis factors such as MAPK8/JNK1, triggering apoptosis. In contrast, dephosphorylation of Tyr-143 by EYA proteins (EYA1, EYA2, EYA3 or EYA4) favors the recruitment of MDC1-containing DNA repair complexes to the tail of phosphorylated Ser-140 (H2AX139ph).</text>
</comment>
<comment type="PTM">
    <text evidence="2 19 20 22 23 26">Monoubiquitination of Lys-120 (H2AXK119ub) by RING1 and RNF2/RING2 complex gives a specific tag for epigenetic transcriptional repression (By similarity). Following DNA double-strand breaks (DSBs), it is ubiquitinated through 'Lys-63' linkage of ubiquitin moieties by the E2 ligase UBE2N and the E3 ligases RNF8 and RNF168, leading to the recruitment of repair proteins to sites of DNA damage. Ubiquitination at Lys-14 and Lys-16 (H2AK13Ub and H2AK15Ub, respectively) in response to DNA damage is initiated by RNF168 that mediates monoubiquitination at these 2 sites, and 'Lys-63'-linked ubiquitin are then conjugated to monoubiquitin; RNF8 is able to extend 'Lys-63'-linked ubiquitin chains in vitro. H2AK119Ub and ionizing radiation-induced 'Lys-63'-linked ubiquitination (H2AK13Ub and H2AK15Ub) are distinct events.</text>
</comment>
<comment type="PTM">
    <text evidence="2 18 28">Acetylation at Lys-6 (H2AXK5ac) by KAT5 component of the NuA4 histone acetyltransferase complex promotes NBN/NBS1 assembly at the sites of DNA damage (PubMed:17709392, PubMed:26438602). Acetylation at Lys-37 increases in S and G2 phases. This modification has been proposed to play a role in DNA double-strand break repair (By similarity).</text>
</comment>
<comment type="similarity">
    <text evidence="35">Belongs to the histone H2A family.</text>
</comment>
<comment type="online information" name="Atlas of Genetics and Cytogenetics in Oncology and Haematology">
    <link uri="https://atlasgeneticsoncology.org/gene/40783/H2AFX"/>
</comment>
<protein>
    <recommendedName>
        <fullName>Histone H2AX</fullName>
        <shortName>H2a/x</shortName>
    </recommendedName>
    <alternativeName>
        <fullName>Histone H2A.X</fullName>
    </alternativeName>
</protein>
<gene>
    <name evidence="36" type="primary">H2AX</name>
    <name evidence="36" type="synonym">H2AFX</name>
</gene>
<proteinExistence type="evidence at protein level"/>
<sequence length="143" mass="15145">MSGRGKTGGKARAKAKSRSSRAGLQFPVGRVHRLLRKGHYAERVGAGAPVYLAAVLEYLTAEILELAGNAARDNKKTRIIPRHLQLAIRNDEELNKLLGGVTIAQGGVLPNIQAVLLPKKTSATVGPKAPSGGKKATQASQEY</sequence>